<feature type="chain" id="PRO_0000119011" description="Structural maintenance of chromosomes protein 1">
    <location>
        <begin position="1"/>
        <end position="1225"/>
    </location>
</feature>
<feature type="domain" description="SMC hinge">
    <location>
        <begin position="527"/>
        <end position="641"/>
    </location>
</feature>
<feature type="coiled-coil region" evidence="1">
    <location>
        <begin position="173"/>
        <end position="489"/>
    </location>
</feature>
<feature type="coiled-coil region" evidence="1">
    <location>
        <begin position="679"/>
        <end position="1063"/>
    </location>
</feature>
<feature type="short sequence motif" description="Nuclear localization signal" evidence="1">
    <location>
        <begin position="1057"/>
        <end position="1061"/>
    </location>
</feature>
<feature type="binding site" evidence="1">
    <location>
        <begin position="33"/>
        <end position="40"/>
    </location>
    <ligand>
        <name>ATP</name>
        <dbReference type="ChEBI" id="CHEBI:30616"/>
    </ligand>
</feature>
<feature type="mutagenesis site" description="In temperature-sensitive mutant SMC1-2.">
    <original>S</original>
    <variation>L</variation>
    <location>
        <position position="173"/>
    </location>
</feature>
<feature type="mutagenesis site" description="In temperature-sensitive mutant SMC1-1.">
    <original>N</original>
    <variation>D</variation>
    <location>
        <position position="458"/>
    </location>
</feature>
<feature type="strand" evidence="6">
    <location>
        <begin position="4"/>
        <end position="11"/>
    </location>
</feature>
<feature type="strand" evidence="6">
    <location>
        <begin position="17"/>
        <end position="22"/>
    </location>
</feature>
<feature type="strand" evidence="6">
    <location>
        <begin position="27"/>
        <end position="32"/>
    </location>
</feature>
<feature type="helix" evidence="6">
    <location>
        <begin position="39"/>
        <end position="49"/>
    </location>
</feature>
<feature type="helix" evidence="6">
    <location>
        <begin position="63"/>
        <end position="65"/>
    </location>
</feature>
<feature type="strand" evidence="6">
    <location>
        <begin position="91"/>
        <end position="100"/>
    </location>
</feature>
<feature type="strand" evidence="6">
    <location>
        <begin position="103"/>
        <end position="112"/>
    </location>
</feature>
<feature type="strand" evidence="6">
    <location>
        <begin position="117"/>
        <end position="121"/>
    </location>
</feature>
<feature type="strand" evidence="6">
    <location>
        <begin position="124"/>
        <end position="126"/>
    </location>
</feature>
<feature type="helix" evidence="6">
    <location>
        <begin position="128"/>
        <end position="137"/>
    </location>
</feature>
<feature type="turn" evidence="6">
    <location>
        <begin position="142"/>
        <end position="144"/>
    </location>
</feature>
<feature type="helix" evidence="6">
    <location>
        <begin position="156"/>
        <end position="159"/>
    </location>
</feature>
<feature type="helix" evidence="6">
    <location>
        <begin position="162"/>
        <end position="167"/>
    </location>
</feature>
<feature type="helix" evidence="6">
    <location>
        <begin position="170"/>
        <end position="173"/>
    </location>
</feature>
<feature type="turn" evidence="6">
    <location>
        <begin position="175"/>
        <end position="178"/>
    </location>
</feature>
<feature type="helix" evidence="6">
    <location>
        <begin position="179"/>
        <end position="188"/>
    </location>
</feature>
<feature type="helix" evidence="6">
    <location>
        <begin position="240"/>
        <end position="259"/>
    </location>
</feature>
<feature type="strand" evidence="6">
    <location>
        <begin position="269"/>
        <end position="272"/>
    </location>
</feature>
<feature type="strand" evidence="6">
    <location>
        <begin position="274"/>
        <end position="279"/>
    </location>
</feature>
<feature type="helix" evidence="6">
    <location>
        <begin position="280"/>
        <end position="282"/>
    </location>
</feature>
<feature type="strand" evidence="6">
    <location>
        <begin position="287"/>
        <end position="290"/>
    </location>
</feature>
<feature type="helix" evidence="6">
    <location>
        <begin position="298"/>
        <end position="300"/>
    </location>
</feature>
<feature type="helix" evidence="6">
    <location>
        <begin position="304"/>
        <end position="319"/>
    </location>
</feature>
<feature type="strand" evidence="6">
    <location>
        <begin position="325"/>
        <end position="331"/>
    </location>
</feature>
<feature type="turn" evidence="6">
    <location>
        <begin position="332"/>
        <end position="335"/>
    </location>
</feature>
<feature type="helix" evidence="6">
    <location>
        <begin position="338"/>
        <end position="350"/>
    </location>
</feature>
<feature type="strand" evidence="6">
    <location>
        <begin position="352"/>
        <end position="357"/>
    </location>
</feature>
<feature type="helix" evidence="6">
    <location>
        <begin position="361"/>
        <end position="364"/>
    </location>
</feature>
<feature type="helix" evidence="7">
    <location>
        <begin position="1005"/>
        <end position="1016"/>
    </location>
</feature>
<feature type="helix" evidence="7">
    <location>
        <begin position="1022"/>
        <end position="1037"/>
    </location>
</feature>
<feature type="helix" evidence="6">
    <location>
        <begin position="1068"/>
        <end position="1071"/>
    </location>
</feature>
<feature type="helix" evidence="6">
    <location>
        <begin position="1079"/>
        <end position="1081"/>
    </location>
</feature>
<feature type="strand" evidence="7">
    <location>
        <begin position="1086"/>
        <end position="1088"/>
    </location>
</feature>
<feature type="strand" evidence="7">
    <location>
        <begin position="1096"/>
        <end position="1102"/>
    </location>
</feature>
<feature type="turn" evidence="7">
    <location>
        <begin position="1107"/>
        <end position="1109"/>
    </location>
</feature>
<feature type="strand" evidence="7">
    <location>
        <begin position="1112"/>
        <end position="1117"/>
    </location>
</feature>
<feature type="helix" evidence="7">
    <location>
        <begin position="1131"/>
        <end position="1147"/>
    </location>
</feature>
<feature type="strand" evidence="7">
    <location>
        <begin position="1152"/>
        <end position="1158"/>
    </location>
</feature>
<feature type="helix" evidence="7">
    <location>
        <begin position="1165"/>
        <end position="1178"/>
    </location>
</feature>
<feature type="strand" evidence="7">
    <location>
        <begin position="1181"/>
        <end position="1188"/>
    </location>
</feature>
<feature type="turn" evidence="7">
    <location>
        <begin position="1192"/>
        <end position="1194"/>
    </location>
</feature>
<feature type="helix" evidence="7">
    <location>
        <begin position="1195"/>
        <end position="1197"/>
    </location>
</feature>
<feature type="strand" evidence="6">
    <location>
        <begin position="1199"/>
        <end position="1207"/>
    </location>
</feature>
<feature type="turn" evidence="6">
    <location>
        <begin position="1208"/>
        <end position="1211"/>
    </location>
</feature>
<feature type="strand" evidence="6">
    <location>
        <begin position="1212"/>
        <end position="1219"/>
    </location>
</feature>
<feature type="helix" evidence="6">
    <location>
        <begin position="1220"/>
        <end position="1222"/>
    </location>
</feature>
<dbReference type="EMBL" id="L00602">
    <property type="protein sequence ID" value="AAA16595.1"/>
    <property type="molecule type" value="Unassigned_DNA"/>
</dbReference>
<dbReference type="EMBL" id="D50617">
    <property type="protein sequence ID" value="BAA09230.1"/>
    <property type="molecule type" value="Genomic_DNA"/>
</dbReference>
<dbReference type="EMBL" id="BK006940">
    <property type="protein sequence ID" value="DAA12432.1"/>
    <property type="molecule type" value="Genomic_DNA"/>
</dbReference>
<dbReference type="PIR" id="A49464">
    <property type="entry name" value="A49464"/>
</dbReference>
<dbReference type="RefSeq" id="NP_116647.1">
    <property type="nucleotide sequence ID" value="NM_001179958.1"/>
</dbReference>
<dbReference type="PDB" id="1W1W">
    <property type="method" value="X-ray"/>
    <property type="resolution" value="2.90 A"/>
    <property type="chains" value="A/B/C/D=1-214, A/B/C/D=1024-1225"/>
</dbReference>
<dbReference type="PDB" id="6ZZ6">
    <property type="method" value="EM"/>
    <property type="resolution" value="3.40 A"/>
    <property type="chains" value="A=1003-1224"/>
</dbReference>
<dbReference type="PDB" id="7OGT">
    <property type="method" value="EM"/>
    <property type="resolution" value="5.50 A"/>
    <property type="chains" value="A=1-1225"/>
</dbReference>
<dbReference type="PDBsum" id="1W1W"/>
<dbReference type="PDBsum" id="6ZZ6"/>
<dbReference type="PDBsum" id="7OGT"/>
<dbReference type="EMDB" id="EMD-11585"/>
<dbReference type="EMDB" id="EMD-12887"/>
<dbReference type="SMR" id="P32908"/>
<dbReference type="BioGRID" id="31139">
    <property type="interactions" value="471"/>
</dbReference>
<dbReference type="ComplexPortal" id="CPX-1408">
    <property type="entry name" value="Nuclear meiotic cohesin complex"/>
</dbReference>
<dbReference type="ComplexPortal" id="CPX-1867">
    <property type="entry name" value="Nuclear mitotic cohesin complex"/>
</dbReference>
<dbReference type="DIP" id="DIP-2982N"/>
<dbReference type="FunCoup" id="P32908">
    <property type="interactions" value="955"/>
</dbReference>
<dbReference type="IntAct" id="P32908">
    <property type="interactions" value="29"/>
</dbReference>
<dbReference type="MINT" id="P32908"/>
<dbReference type="STRING" id="4932.YFL008W"/>
<dbReference type="iPTMnet" id="P32908"/>
<dbReference type="PaxDb" id="4932-YFL008W"/>
<dbReference type="PeptideAtlas" id="P32908"/>
<dbReference type="EnsemblFungi" id="YFL008W_mRNA">
    <property type="protein sequence ID" value="YFL008W"/>
    <property type="gene ID" value="YFL008W"/>
</dbReference>
<dbReference type="GeneID" id="850540"/>
<dbReference type="KEGG" id="sce:YFL008W"/>
<dbReference type="AGR" id="SGD:S000001886"/>
<dbReference type="SGD" id="S000001886">
    <property type="gene designation" value="SMC1"/>
</dbReference>
<dbReference type="VEuPathDB" id="FungiDB:YFL008W"/>
<dbReference type="eggNOG" id="KOG0018">
    <property type="taxonomic scope" value="Eukaryota"/>
</dbReference>
<dbReference type="GeneTree" id="ENSGT00940000171089"/>
<dbReference type="HOGENOM" id="CLU_001042_0_1_1"/>
<dbReference type="InParanoid" id="P32908"/>
<dbReference type="OMA" id="KHMDFQR"/>
<dbReference type="OrthoDB" id="5575062at2759"/>
<dbReference type="BioCyc" id="YEAST:G3O-30448-MONOMER"/>
<dbReference type="Reactome" id="R-SCE-2468052">
    <property type="pathway name" value="Establishment of Sister Chromatid Cohesion"/>
</dbReference>
<dbReference type="Reactome" id="R-SCE-2500257">
    <property type="pathway name" value="Resolution of Sister Chromatid Cohesion"/>
</dbReference>
<dbReference type="Reactome" id="R-SCE-3108214">
    <property type="pathway name" value="SUMOylation of DNA damage response and repair proteins"/>
</dbReference>
<dbReference type="BioGRID-ORCS" id="850540">
    <property type="hits" value="0 hits in 10 CRISPR screens"/>
</dbReference>
<dbReference type="CD-CODE" id="5F622AE2">
    <property type="entry name" value="Synthetic Condensate 000372"/>
</dbReference>
<dbReference type="EvolutionaryTrace" id="P32908"/>
<dbReference type="PRO" id="PR:P32908"/>
<dbReference type="Proteomes" id="UP000002311">
    <property type="component" value="Chromosome VI"/>
</dbReference>
<dbReference type="RNAct" id="P32908">
    <property type="molecule type" value="protein"/>
</dbReference>
<dbReference type="GO" id="GO:0008278">
    <property type="term" value="C:cohesin complex"/>
    <property type="evidence" value="ECO:0000318"/>
    <property type="project" value="GO_Central"/>
</dbReference>
<dbReference type="GO" id="GO:0030893">
    <property type="term" value="C:meiotic cohesin complex"/>
    <property type="evidence" value="ECO:0000303"/>
    <property type="project" value="ComplexPortal"/>
</dbReference>
<dbReference type="GO" id="GO:0030892">
    <property type="term" value="C:mitotic cohesin complex"/>
    <property type="evidence" value="ECO:0000314"/>
    <property type="project" value="SGD"/>
</dbReference>
<dbReference type="GO" id="GO:0005634">
    <property type="term" value="C:nucleus"/>
    <property type="evidence" value="ECO:0007005"/>
    <property type="project" value="SGD"/>
</dbReference>
<dbReference type="GO" id="GO:0005524">
    <property type="term" value="F:ATP binding"/>
    <property type="evidence" value="ECO:0007669"/>
    <property type="project" value="UniProtKB-KW"/>
</dbReference>
<dbReference type="GO" id="GO:0016887">
    <property type="term" value="F:ATP hydrolysis activity"/>
    <property type="evidence" value="ECO:0007669"/>
    <property type="project" value="InterPro"/>
</dbReference>
<dbReference type="GO" id="GO:0003677">
    <property type="term" value="F:DNA binding"/>
    <property type="evidence" value="ECO:0000318"/>
    <property type="project" value="GO_Central"/>
</dbReference>
<dbReference type="GO" id="GO:0000217">
    <property type="term" value="F:DNA secondary structure binding"/>
    <property type="evidence" value="ECO:0000314"/>
    <property type="project" value="SGD"/>
</dbReference>
<dbReference type="GO" id="GO:0003690">
    <property type="term" value="F:double-stranded DNA binding"/>
    <property type="evidence" value="ECO:0000314"/>
    <property type="project" value="SGD"/>
</dbReference>
<dbReference type="GO" id="GO:0042802">
    <property type="term" value="F:identical protein binding"/>
    <property type="evidence" value="ECO:0000353"/>
    <property type="project" value="IntAct"/>
</dbReference>
<dbReference type="GO" id="GO:0003680">
    <property type="term" value="F:minor groove of adenine-thymine-rich DNA binding"/>
    <property type="evidence" value="ECO:0000314"/>
    <property type="project" value="SGD"/>
</dbReference>
<dbReference type="GO" id="GO:0051301">
    <property type="term" value="P:cell division"/>
    <property type="evidence" value="ECO:0007669"/>
    <property type="project" value="UniProtKB-KW"/>
</dbReference>
<dbReference type="GO" id="GO:0006302">
    <property type="term" value="P:double-strand break repair"/>
    <property type="evidence" value="ECO:0000315"/>
    <property type="project" value="SGD"/>
</dbReference>
<dbReference type="GO" id="GO:0034089">
    <property type="term" value="P:establishment of meiotic sister chromatid cohesion"/>
    <property type="evidence" value="ECO:0000303"/>
    <property type="project" value="ComplexPortal"/>
</dbReference>
<dbReference type="GO" id="GO:0034087">
    <property type="term" value="P:establishment of mitotic sister chromatid cohesion"/>
    <property type="evidence" value="ECO:0000303"/>
    <property type="project" value="ComplexPortal"/>
</dbReference>
<dbReference type="GO" id="GO:0007064">
    <property type="term" value="P:mitotic sister chromatid cohesion"/>
    <property type="evidence" value="ECO:0000316"/>
    <property type="project" value="SGD"/>
</dbReference>
<dbReference type="GO" id="GO:0000070">
    <property type="term" value="P:mitotic sister chromatid segregation"/>
    <property type="evidence" value="ECO:0000315"/>
    <property type="project" value="SGD"/>
</dbReference>
<dbReference type="GO" id="GO:0007062">
    <property type="term" value="P:sister chromatid cohesion"/>
    <property type="evidence" value="ECO:0000318"/>
    <property type="project" value="GO_Central"/>
</dbReference>
<dbReference type="CDD" id="cd03275">
    <property type="entry name" value="ABC_SMC1_euk"/>
    <property type="match status" value="2"/>
</dbReference>
<dbReference type="FunFam" id="3.40.50.300:FF:003350">
    <property type="entry name" value="Structural maintenance of chromosomes protein 1"/>
    <property type="match status" value="1"/>
</dbReference>
<dbReference type="Gene3D" id="1.10.287.1490">
    <property type="match status" value="2"/>
</dbReference>
<dbReference type="Gene3D" id="1.20.1060.20">
    <property type="match status" value="1"/>
</dbReference>
<dbReference type="Gene3D" id="3.30.70.1620">
    <property type="match status" value="1"/>
</dbReference>
<dbReference type="Gene3D" id="3.40.50.300">
    <property type="entry name" value="P-loop containing nucleotide triphosphate hydrolases"/>
    <property type="match status" value="2"/>
</dbReference>
<dbReference type="InterPro" id="IPR027417">
    <property type="entry name" value="P-loop_NTPase"/>
</dbReference>
<dbReference type="InterPro" id="IPR003395">
    <property type="entry name" value="RecF/RecN/SMC_N"/>
</dbReference>
<dbReference type="InterPro" id="IPR024704">
    <property type="entry name" value="SMC"/>
</dbReference>
<dbReference type="InterPro" id="IPR028468">
    <property type="entry name" value="Smc1_ABC"/>
</dbReference>
<dbReference type="InterPro" id="IPR010935">
    <property type="entry name" value="SMC_hinge"/>
</dbReference>
<dbReference type="InterPro" id="IPR036277">
    <property type="entry name" value="SMC_hinge_sf"/>
</dbReference>
<dbReference type="PANTHER" id="PTHR18937:SF12">
    <property type="entry name" value="STRUCTURAL MAINTENANCE OF CHROMOSOMES PROTEIN"/>
    <property type="match status" value="1"/>
</dbReference>
<dbReference type="PANTHER" id="PTHR18937">
    <property type="entry name" value="STRUCTURAL MAINTENANCE OF CHROMOSOMES SMC FAMILY MEMBER"/>
    <property type="match status" value="1"/>
</dbReference>
<dbReference type="Pfam" id="PF06470">
    <property type="entry name" value="SMC_hinge"/>
    <property type="match status" value="1"/>
</dbReference>
<dbReference type="Pfam" id="PF02463">
    <property type="entry name" value="SMC_N"/>
    <property type="match status" value="1"/>
</dbReference>
<dbReference type="PIRSF" id="PIRSF005719">
    <property type="entry name" value="SMC"/>
    <property type="match status" value="1"/>
</dbReference>
<dbReference type="SMART" id="SM00968">
    <property type="entry name" value="SMC_hinge"/>
    <property type="match status" value="1"/>
</dbReference>
<dbReference type="SUPFAM" id="SSF52540">
    <property type="entry name" value="P-loop containing nucleoside triphosphate hydrolases"/>
    <property type="match status" value="2"/>
</dbReference>
<dbReference type="SUPFAM" id="SSF75553">
    <property type="entry name" value="Smc hinge domain"/>
    <property type="match status" value="1"/>
</dbReference>
<dbReference type="SUPFAM" id="SSF57997">
    <property type="entry name" value="Tropomyosin"/>
    <property type="match status" value="1"/>
</dbReference>
<accession>P32908</accession>
<accession>D6VTM2</accession>
<proteinExistence type="evidence at protein level"/>
<gene>
    <name type="primary">SMC1</name>
    <name type="synonym">CHL10</name>
    <name type="ordered locus">YFL008W</name>
</gene>
<organism>
    <name type="scientific">Saccharomyces cerevisiae (strain ATCC 204508 / S288c)</name>
    <name type="common">Baker's yeast</name>
    <dbReference type="NCBI Taxonomy" id="559292"/>
    <lineage>
        <taxon>Eukaryota</taxon>
        <taxon>Fungi</taxon>
        <taxon>Dikarya</taxon>
        <taxon>Ascomycota</taxon>
        <taxon>Saccharomycotina</taxon>
        <taxon>Saccharomycetes</taxon>
        <taxon>Saccharomycetales</taxon>
        <taxon>Saccharomycetaceae</taxon>
        <taxon>Saccharomyces</taxon>
    </lineage>
</organism>
<protein>
    <recommendedName>
        <fullName>Structural maintenance of chromosomes protein 1</fullName>
    </recommendedName>
    <alternativeName>
        <fullName>DA-box protein SMC1</fullName>
    </alternativeName>
</protein>
<comment type="function">
    <text>Involved in chromosome cohesion during cell cycle and in DNA repair. Central component of cohesin complex. The cohesin complex is required for the cohesion of sister chromatids after DNA replication. The cohesin complex apparently forms a large proteinaceous ring within which sister chromatids can be trapped. At anaphase, the complex is cleaved and dissociates from chromatin, allowing sister chromatids to segregate.</text>
</comment>
<comment type="subunit">
    <text evidence="2 4">Cohesin complexes are composed of the SMC1 and SMC3 heterodimer attached via their SMC hinge domain, MCD1/SCC1 which link them, and IRR1/SCC3, which interacts with MCD1. The cohesin complex also interacts with SCC2, which is required for its association with chromosomes.</text>
</comment>
<comment type="interaction">
    <interactant intactId="EBI-17402">
        <id>P32908</id>
    </interactant>
    <interactant intactId="EBI-6230">
        <id>P36022</id>
        <label>DYN1</label>
    </interactant>
    <organismsDiffer>false</organismsDiffer>
    <experiments>3</experiments>
</comment>
<comment type="interaction">
    <interactant intactId="EBI-17402">
        <id>P32908</id>
    </interactant>
    <interactant intactId="EBI-9499">
        <id>P17119</id>
        <label>KAR3</label>
    </interactant>
    <organismsDiffer>false</organismsDiffer>
    <experiments>4</experiments>
</comment>
<comment type="interaction">
    <interactant intactId="EBI-17402">
        <id>P32908</id>
    </interactant>
    <interactant intactId="EBI-16655">
        <id>Q12158</id>
        <label>MCD1</label>
    </interactant>
    <organismsDiffer>false</organismsDiffer>
    <experiments>10</experiments>
</comment>
<comment type="interaction">
    <interactant intactId="EBI-17402">
        <id>P32908</id>
    </interactant>
    <interactant intactId="EBI-12098">
        <id>P47149</id>
        <label>NNF1</label>
    </interactant>
    <organismsDiffer>false</organismsDiffer>
    <experiments>6</experiments>
</comment>
<comment type="interaction">
    <interactant intactId="EBI-17402">
        <id>P32908</id>
    </interactant>
    <interactant intactId="EBI-23229">
        <id>P53253</id>
        <label>NNF2</label>
    </interactant>
    <organismsDiffer>false</organismsDiffer>
    <experiments>4</experiments>
</comment>
<comment type="interaction">
    <interactant intactId="EBI-17402">
        <id>P32908</id>
    </interactant>
    <interactant intactId="EBI-17402">
        <id>P32908</id>
        <label>SMC1</label>
    </interactant>
    <organismsDiffer>false</organismsDiffer>
    <experiments>7</experiments>
</comment>
<comment type="interaction">
    <interactant intactId="EBI-17402">
        <id>P32908</id>
    </interactant>
    <interactant intactId="EBI-17412">
        <id>P38989</id>
        <label>SMC2</label>
    </interactant>
    <organismsDiffer>false</organismsDiffer>
    <experiments>3</experiments>
</comment>
<comment type="interaction">
    <interactant intactId="EBI-17402">
        <id>P32908</id>
    </interactant>
    <interactant intactId="EBI-17423">
        <id>P47037</id>
        <label>SMC3</label>
    </interactant>
    <organismsDiffer>false</organismsDiffer>
    <experiments>20</experiments>
</comment>
<comment type="interaction">
    <interactant intactId="EBI-17402">
        <id>P32908</id>
    </interactant>
    <interactant intactId="EBI-17490">
        <id>Q12306</id>
        <label>SMT3</label>
    </interactant>
    <organismsDiffer>false</organismsDiffer>
    <experiments>2</experiments>
</comment>
<comment type="interaction">
    <interactant intactId="EBI-17402">
        <id>P32908</id>
    </interactant>
    <interactant intactId="EBI-17777">
        <id>P36094</id>
        <label>SPC42</label>
    </interactant>
    <organismsDiffer>false</organismsDiffer>
    <experiments>3</experiments>
</comment>
<comment type="interaction">
    <interactant intactId="EBI-17402">
        <id>P32908</id>
    </interactant>
    <interactant intactId="EBI-4334">
        <id>P32558</id>
        <label>SPT16</label>
    </interactant>
    <organismsDiffer>false</organismsDiffer>
    <experiments>2</experiments>
</comment>
<comment type="interaction">
    <interactant intactId="EBI-17402">
        <id>P32908</id>
    </interactant>
    <interactant intactId="EBI-80718">
        <id>Q9UQE7</id>
        <label>SMC3</label>
    </interactant>
    <organismsDiffer>true</organismsDiffer>
    <experiments>4</experiments>
</comment>
<comment type="subcellular location">
    <subcellularLocation>
        <location>Nucleus</location>
    </subcellularLocation>
    <subcellularLocation>
        <location>Chromosome</location>
    </subcellularLocation>
    <text>Associates with chromatin. Before prophase it is scattered along chromosome arms. At anaphase, the MCD1 subunit of the cohesin complex is cleaved, leading to the dissociation of the complex from chromosomes, allowing chromosome separation.</text>
</comment>
<comment type="domain">
    <text>The flexible SMC hinge domain, which separates the large intramolecular coiled coil regions, allows the heterotypic interaction with the corresponding domain of SMC3, forming a V-shaped heterodimer. The two heads of the heterodimer are then connected by different ends of the cleavable MCD1 protein, forming a ring structure.</text>
</comment>
<comment type="miscellaneous">
    <text evidence="3">Present with 5710 molecules/cell in log phase SD medium.</text>
</comment>
<comment type="similarity">
    <text evidence="5">Belongs to the SMC family. SMC1 subfamily.</text>
</comment>
<reference key="1">
    <citation type="journal article" date="1993" name="J. Cell Biol.">
        <title>SMC1: an essential yeast gene encoding a putative head-rod-tail protein is required for nuclear division and defines a new ubiquitous protein family.</title>
        <authorList>
            <person name="Strunnikov A.V."/>
            <person name="Larionov V.L."/>
            <person name="Koshland D."/>
        </authorList>
    </citation>
    <scope>NUCLEOTIDE SEQUENCE</scope>
    <scope>MUTANTS SMC1-1 AND SMC1-2</scope>
</reference>
<reference key="2">
    <citation type="journal article" date="1995" name="Nat. Genet.">
        <title>Analysis of the nucleotide sequence of chromosome VI from Saccharomyces cerevisiae.</title>
        <authorList>
            <person name="Murakami Y."/>
            <person name="Naitou M."/>
            <person name="Hagiwara H."/>
            <person name="Shibata T."/>
            <person name="Ozawa M."/>
            <person name="Sasanuma S."/>
            <person name="Sasanuma M."/>
            <person name="Tsuchiya Y."/>
            <person name="Soeda E."/>
            <person name="Yokoyama K."/>
            <person name="Yamazaki M."/>
            <person name="Tashiro H."/>
            <person name="Eki T."/>
        </authorList>
    </citation>
    <scope>NUCLEOTIDE SEQUENCE [LARGE SCALE GENOMIC DNA]</scope>
    <source>
        <strain>ATCC 204508 / S288c</strain>
    </source>
</reference>
<reference key="3">
    <citation type="journal article" date="2014" name="G3 (Bethesda)">
        <title>The reference genome sequence of Saccharomyces cerevisiae: Then and now.</title>
        <authorList>
            <person name="Engel S.R."/>
            <person name="Dietrich F.S."/>
            <person name="Fisk D.G."/>
            <person name="Binkley G."/>
            <person name="Balakrishnan R."/>
            <person name="Costanzo M.C."/>
            <person name="Dwight S.S."/>
            <person name="Hitz B.C."/>
            <person name="Karra K."/>
            <person name="Nash R.S."/>
            <person name="Weng S."/>
            <person name="Wong E.D."/>
            <person name="Lloyd P."/>
            <person name="Skrzypek M.S."/>
            <person name="Miyasato S.R."/>
            <person name="Simison M."/>
            <person name="Cherry J.M."/>
        </authorList>
    </citation>
    <scope>GENOME REANNOTATION</scope>
    <source>
        <strain>ATCC 204508 / S288c</strain>
    </source>
</reference>
<reference key="4">
    <citation type="journal article" date="1999" name="Genes Dev.">
        <title>Yeast cohesin complex requires a conserved protein, Eco1p(Ctf7), to establish cohesion between sister chromatids during DNA replication.</title>
        <authorList>
            <person name="Toth A."/>
            <person name="Ciosk R."/>
            <person name="Uhlmann F."/>
            <person name="Galova M."/>
            <person name="Schleiffer A."/>
            <person name="Nasmyth K."/>
        </authorList>
    </citation>
    <scope>IDENTIFICATION IN A COHESIN COMPLEX WITH SMC3; IRR1 AND MCD1</scope>
    <scope>INTERACTION OF THE COHESIN COMPLEX WITH SCC2</scope>
</reference>
<reference key="5">
    <citation type="journal article" date="2002" name="Mol. Cell">
        <title>Molecular architecture of SMC proteins and the yeast cohesin complex.</title>
        <authorList>
            <person name="Haering C.H."/>
            <person name="Loewe J."/>
            <person name="Hochwagen A."/>
            <person name="Nasmyth K."/>
        </authorList>
    </citation>
    <scope>IDENTIFICATION IN A COHESIN COMPLEX WITH SMC3; MCD1 AND IRR1</scope>
    <scope>STRUCTURE</scope>
</reference>
<reference key="6">
    <citation type="journal article" date="2003" name="Nature">
        <title>Global analysis of protein expression in yeast.</title>
        <authorList>
            <person name="Ghaemmaghami S."/>
            <person name="Huh W.-K."/>
            <person name="Bower K."/>
            <person name="Howson R.W."/>
            <person name="Belle A."/>
            <person name="Dephoure N."/>
            <person name="O'Shea E.K."/>
            <person name="Weissman J.S."/>
        </authorList>
    </citation>
    <scope>LEVEL OF PROTEIN EXPRESSION [LARGE SCALE ANALYSIS]</scope>
</reference>
<keyword id="KW-0002">3D-structure</keyword>
<keyword id="KW-0067">ATP-binding</keyword>
<keyword id="KW-0131">Cell cycle</keyword>
<keyword id="KW-0132">Cell division</keyword>
<keyword id="KW-0158">Chromosome</keyword>
<keyword id="KW-0175">Coiled coil</keyword>
<keyword id="KW-0498">Mitosis</keyword>
<keyword id="KW-0547">Nucleotide-binding</keyword>
<keyword id="KW-0539">Nucleus</keyword>
<keyword id="KW-1185">Reference proteome</keyword>
<evidence type="ECO:0000255" key="1"/>
<evidence type="ECO:0000269" key="2">
    <source>
    </source>
</evidence>
<evidence type="ECO:0000269" key="3">
    <source>
    </source>
</evidence>
<evidence type="ECO:0000269" key="4">
    <source>
    </source>
</evidence>
<evidence type="ECO:0000305" key="5"/>
<evidence type="ECO:0007829" key="6">
    <source>
        <dbReference type="PDB" id="1W1W"/>
    </source>
</evidence>
<evidence type="ECO:0007829" key="7">
    <source>
        <dbReference type="PDB" id="6ZZ6"/>
    </source>
</evidence>
<sequence>MGRLVGLELSNFKSYRGVTKVGFGESNFTSIIGPNGSGKSNMMDAISFVLGVRSNHLRSNILKDLIYRGVLNDENSDDYDNEGAASSNPQSAYVKAFYQKGNKLVELMRIISRNGDTSYKIDGKTVSYKDYSIFLENENILIKAKNFLVFQGDVEQIAAQSPVELSRMFEEVSGSIQYKKEYEELKEKIEKLSKSATESIKNRRRIHGELKTYKEGINKNEEYRKQLDKKNELQKFQALWQLYHLEQQKEELTDKLSALNSEISSLKGKINNEMKSLQRSKSSFVKESAVISKQKSKLDYIFKDKEKLVSDLRLIKVPQQAAGKRISHIEKRIESLQKDLQRQKTYVERFETQLKVVTRSKEAFEEEIKQSARNYDKFKLNENDLKTYNCLHEKYLTEGGSILEEKIAVLNNDKREIQEELERFNKRADISKRRITEELSITGEKLDTQLNDLRVSLNEKNALHTERLHELKKLQSDIESANNQEYDLNFKLRETLVKIDDLSANQRETMKERKLRENIAMLKRFFPGVKGLVHDLCHPKKEKYGLAVSTILGKNFDSVIVENLTVAQECIAFLKKQRAGTASFIPLDTIETELPTLSLPDSQDYILSINAIDYEPEYEKAMQYVCGDSIICNTLNIAKDLKWKKGIRGKLVTIEGALIHKAGLMTGGISGDANNRWDKEEYQSLMSLKDKLLIQIDELSNGQRSNSIRAREVENSVSLLNSDIANLRTQVTQQKRSLDENRLEIKYHNDLIEKEIQPKITELKKKLDDLENTKDNLVKEKEALQNNIFKEFTSKIGFTIKEYENHSGELMRQQSKELQQLQKQILTVENKLQFETDRLSTTQRRYEKAQKDLENAQVEMKSLEEQEYAIEMKIGSIESKLEEHKNHLDELQKKFVTKQSELNSSEDILEDMNSNLQVLKRERDGIKEDIEKFDLERVTALKNCKISNINIPISSETTIDDLPISSTDNEAITISNSIDINYKGLPKKYKENNTDSARKELEQKIHEVEEILNELQPNARALERYDEAEGRFEVINNETEQLKAEEKKILNQFLKIKKKRKELFEKTFDYVSDHLDAIYRELTKNPNSNVELAGGNASLTIEDEDEPFNAGIKYHATPPLKRFKDMEYLSGGEKTVAALALLFAINSYQPSPFFVLDEVDAALDITNVQRIAAYIRRHRNPDLQFIVISLKNTMFEKSDALVGVYRQQQENSSKIITLDLSNYAE</sequence>
<name>SMC1_YEAST</name>